<feature type="chain" id="PRO_0000305396" description="Pantothenate synthetase">
    <location>
        <begin position="1"/>
        <end position="282"/>
    </location>
</feature>
<feature type="active site" description="Proton donor" evidence="1">
    <location>
        <position position="37"/>
    </location>
</feature>
<feature type="binding site" evidence="1">
    <location>
        <begin position="30"/>
        <end position="37"/>
    </location>
    <ligand>
        <name>ATP</name>
        <dbReference type="ChEBI" id="CHEBI:30616"/>
    </ligand>
</feature>
<feature type="binding site" evidence="1">
    <location>
        <position position="61"/>
    </location>
    <ligand>
        <name>(R)-pantoate</name>
        <dbReference type="ChEBI" id="CHEBI:15980"/>
    </ligand>
</feature>
<feature type="binding site" evidence="1">
    <location>
        <position position="61"/>
    </location>
    <ligand>
        <name>beta-alanine</name>
        <dbReference type="ChEBI" id="CHEBI:57966"/>
    </ligand>
</feature>
<feature type="binding site" evidence="1">
    <location>
        <begin position="147"/>
        <end position="150"/>
    </location>
    <ligand>
        <name>ATP</name>
        <dbReference type="ChEBI" id="CHEBI:30616"/>
    </ligand>
</feature>
<feature type="binding site" evidence="1">
    <location>
        <position position="153"/>
    </location>
    <ligand>
        <name>(R)-pantoate</name>
        <dbReference type="ChEBI" id="CHEBI:15980"/>
    </ligand>
</feature>
<feature type="binding site" evidence="1">
    <location>
        <position position="176"/>
    </location>
    <ligand>
        <name>ATP</name>
        <dbReference type="ChEBI" id="CHEBI:30616"/>
    </ligand>
</feature>
<feature type="binding site" evidence="1">
    <location>
        <begin position="184"/>
        <end position="187"/>
    </location>
    <ligand>
        <name>ATP</name>
        <dbReference type="ChEBI" id="CHEBI:30616"/>
    </ligand>
</feature>
<sequence>MKIVTTVQEMQHITKELRASGKSIGFVPTMGYLHEGHATLLRKAREENEIVVLSVFVNPLQFGPNEDLDRYPRDIDRDENVAKENGVDYLFYPSVEEMYPAEQTTTVEVVKRTDVLCGKQRPGHFAGVATVLMKLFNITLPTRAYFGMKDAQQVAVIEGFVADFNIPVTIVRVDIVREEDGLAKSSRNVYLSQEERKEAPHLYRSLCMAKERIEAGERNAEIITTLVKEYIETYTKGTVDYADLYAYPSLQVVDQIEGRIILAIAVKFENVRLIDNITLTVK</sequence>
<keyword id="KW-0067">ATP-binding</keyword>
<keyword id="KW-0963">Cytoplasm</keyword>
<keyword id="KW-0436">Ligase</keyword>
<keyword id="KW-0547">Nucleotide-binding</keyword>
<keyword id="KW-0566">Pantothenate biosynthesis</keyword>
<gene>
    <name evidence="1" type="primary">panC</name>
    <name type="ordered locus">BCE33L1423</name>
</gene>
<reference key="1">
    <citation type="journal article" date="2006" name="J. Bacteriol.">
        <title>Pathogenomic sequence analysis of Bacillus cereus and Bacillus thuringiensis isolates closely related to Bacillus anthracis.</title>
        <authorList>
            <person name="Han C.S."/>
            <person name="Xie G."/>
            <person name="Challacombe J.F."/>
            <person name="Altherr M.R."/>
            <person name="Bhotika S.S."/>
            <person name="Bruce D."/>
            <person name="Campbell C.S."/>
            <person name="Campbell M.L."/>
            <person name="Chen J."/>
            <person name="Chertkov O."/>
            <person name="Cleland C."/>
            <person name="Dimitrijevic M."/>
            <person name="Doggett N.A."/>
            <person name="Fawcett J.J."/>
            <person name="Glavina T."/>
            <person name="Goodwin L.A."/>
            <person name="Hill K.K."/>
            <person name="Hitchcock P."/>
            <person name="Jackson P.J."/>
            <person name="Keim P."/>
            <person name="Kewalramani A.R."/>
            <person name="Longmire J."/>
            <person name="Lucas S."/>
            <person name="Malfatti S."/>
            <person name="McMurry K."/>
            <person name="Meincke L.J."/>
            <person name="Misra M."/>
            <person name="Moseman B.L."/>
            <person name="Mundt M."/>
            <person name="Munk A.C."/>
            <person name="Okinaka R.T."/>
            <person name="Parson-Quintana B."/>
            <person name="Reilly L.P."/>
            <person name="Richardson P."/>
            <person name="Robinson D.L."/>
            <person name="Rubin E."/>
            <person name="Saunders E."/>
            <person name="Tapia R."/>
            <person name="Tesmer J.G."/>
            <person name="Thayer N."/>
            <person name="Thompson L.S."/>
            <person name="Tice H."/>
            <person name="Ticknor L.O."/>
            <person name="Wills P.L."/>
            <person name="Brettin T.S."/>
            <person name="Gilna P."/>
        </authorList>
    </citation>
    <scope>NUCLEOTIDE SEQUENCE [LARGE SCALE GENOMIC DNA]</scope>
    <source>
        <strain>ZK / E33L</strain>
    </source>
</reference>
<name>PANC_BACCZ</name>
<dbReference type="EC" id="6.3.2.1" evidence="1"/>
<dbReference type="EMBL" id="CP000001">
    <property type="protein sequence ID" value="AAU18827.1"/>
    <property type="molecule type" value="Genomic_DNA"/>
</dbReference>
<dbReference type="RefSeq" id="WP_000706999.1">
    <property type="nucleotide sequence ID" value="NC_006274.1"/>
</dbReference>
<dbReference type="SMR" id="Q63DJ2"/>
<dbReference type="KEGG" id="bcz:BCE33L1423"/>
<dbReference type="PATRIC" id="fig|288681.22.peg.4130"/>
<dbReference type="UniPathway" id="UPA00028">
    <property type="reaction ID" value="UER00005"/>
</dbReference>
<dbReference type="Proteomes" id="UP000002612">
    <property type="component" value="Chromosome"/>
</dbReference>
<dbReference type="GO" id="GO:0005829">
    <property type="term" value="C:cytosol"/>
    <property type="evidence" value="ECO:0007669"/>
    <property type="project" value="TreeGrafter"/>
</dbReference>
<dbReference type="GO" id="GO:0005524">
    <property type="term" value="F:ATP binding"/>
    <property type="evidence" value="ECO:0007669"/>
    <property type="project" value="UniProtKB-KW"/>
</dbReference>
<dbReference type="GO" id="GO:0004592">
    <property type="term" value="F:pantoate-beta-alanine ligase activity"/>
    <property type="evidence" value="ECO:0007669"/>
    <property type="project" value="UniProtKB-UniRule"/>
</dbReference>
<dbReference type="GO" id="GO:0015940">
    <property type="term" value="P:pantothenate biosynthetic process"/>
    <property type="evidence" value="ECO:0007669"/>
    <property type="project" value="UniProtKB-UniRule"/>
</dbReference>
<dbReference type="CDD" id="cd00560">
    <property type="entry name" value="PanC"/>
    <property type="match status" value="1"/>
</dbReference>
<dbReference type="FunFam" id="3.30.1300.10:FF:000001">
    <property type="entry name" value="Pantothenate synthetase"/>
    <property type="match status" value="1"/>
</dbReference>
<dbReference type="FunFam" id="3.40.50.620:FF:000013">
    <property type="entry name" value="Pantothenate synthetase"/>
    <property type="match status" value="1"/>
</dbReference>
<dbReference type="Gene3D" id="3.40.50.620">
    <property type="entry name" value="HUPs"/>
    <property type="match status" value="1"/>
</dbReference>
<dbReference type="Gene3D" id="3.30.1300.10">
    <property type="entry name" value="Pantoate-beta-alanine ligase, C-terminal domain"/>
    <property type="match status" value="1"/>
</dbReference>
<dbReference type="HAMAP" id="MF_00158">
    <property type="entry name" value="PanC"/>
    <property type="match status" value="1"/>
</dbReference>
<dbReference type="InterPro" id="IPR004821">
    <property type="entry name" value="Cyt_trans-like"/>
</dbReference>
<dbReference type="InterPro" id="IPR003721">
    <property type="entry name" value="Pantoate_ligase"/>
</dbReference>
<dbReference type="InterPro" id="IPR042176">
    <property type="entry name" value="Pantoate_ligase_C"/>
</dbReference>
<dbReference type="InterPro" id="IPR014729">
    <property type="entry name" value="Rossmann-like_a/b/a_fold"/>
</dbReference>
<dbReference type="NCBIfam" id="TIGR00125">
    <property type="entry name" value="cyt_tran_rel"/>
    <property type="match status" value="1"/>
</dbReference>
<dbReference type="NCBIfam" id="TIGR00018">
    <property type="entry name" value="panC"/>
    <property type="match status" value="1"/>
</dbReference>
<dbReference type="PANTHER" id="PTHR21299">
    <property type="entry name" value="CYTIDYLATE KINASE/PANTOATE-BETA-ALANINE LIGASE"/>
    <property type="match status" value="1"/>
</dbReference>
<dbReference type="PANTHER" id="PTHR21299:SF1">
    <property type="entry name" value="PANTOATE--BETA-ALANINE LIGASE"/>
    <property type="match status" value="1"/>
</dbReference>
<dbReference type="Pfam" id="PF02569">
    <property type="entry name" value="Pantoate_ligase"/>
    <property type="match status" value="1"/>
</dbReference>
<dbReference type="SUPFAM" id="SSF52374">
    <property type="entry name" value="Nucleotidylyl transferase"/>
    <property type="match status" value="1"/>
</dbReference>
<protein>
    <recommendedName>
        <fullName evidence="1">Pantothenate synthetase</fullName>
        <shortName evidence="1">PS</shortName>
        <ecNumber evidence="1">6.3.2.1</ecNumber>
    </recommendedName>
    <alternativeName>
        <fullName evidence="1">Pantoate--beta-alanine ligase</fullName>
    </alternativeName>
    <alternativeName>
        <fullName evidence="1">Pantoate-activating enzyme</fullName>
    </alternativeName>
</protein>
<organism>
    <name type="scientific">Bacillus cereus (strain ZK / E33L)</name>
    <dbReference type="NCBI Taxonomy" id="288681"/>
    <lineage>
        <taxon>Bacteria</taxon>
        <taxon>Bacillati</taxon>
        <taxon>Bacillota</taxon>
        <taxon>Bacilli</taxon>
        <taxon>Bacillales</taxon>
        <taxon>Bacillaceae</taxon>
        <taxon>Bacillus</taxon>
        <taxon>Bacillus cereus group</taxon>
    </lineage>
</organism>
<accession>Q63DJ2</accession>
<proteinExistence type="inferred from homology"/>
<comment type="function">
    <text evidence="1">Catalyzes the condensation of pantoate with beta-alanine in an ATP-dependent reaction via a pantoyl-adenylate intermediate.</text>
</comment>
<comment type="catalytic activity">
    <reaction evidence="1">
        <text>(R)-pantoate + beta-alanine + ATP = (R)-pantothenate + AMP + diphosphate + H(+)</text>
        <dbReference type="Rhea" id="RHEA:10912"/>
        <dbReference type="ChEBI" id="CHEBI:15378"/>
        <dbReference type="ChEBI" id="CHEBI:15980"/>
        <dbReference type="ChEBI" id="CHEBI:29032"/>
        <dbReference type="ChEBI" id="CHEBI:30616"/>
        <dbReference type="ChEBI" id="CHEBI:33019"/>
        <dbReference type="ChEBI" id="CHEBI:57966"/>
        <dbReference type="ChEBI" id="CHEBI:456215"/>
        <dbReference type="EC" id="6.3.2.1"/>
    </reaction>
</comment>
<comment type="pathway">
    <text evidence="1">Cofactor biosynthesis; (R)-pantothenate biosynthesis; (R)-pantothenate from (R)-pantoate and beta-alanine: step 1/1.</text>
</comment>
<comment type="subunit">
    <text evidence="1">Homodimer.</text>
</comment>
<comment type="subcellular location">
    <subcellularLocation>
        <location evidence="1">Cytoplasm</location>
    </subcellularLocation>
</comment>
<comment type="miscellaneous">
    <text evidence="1">The reaction proceeds by a bi uni uni bi ping pong mechanism.</text>
</comment>
<comment type="similarity">
    <text evidence="1">Belongs to the pantothenate synthetase family.</text>
</comment>
<evidence type="ECO:0000255" key="1">
    <source>
        <dbReference type="HAMAP-Rule" id="MF_00158"/>
    </source>
</evidence>